<accession>Q38055</accession>
<reference key="1">
    <citation type="journal article" date="1997" name="J. Mol. Biol.">
        <title>The genome of the pseudo T-even bacteriophages, a diverse group that resembles T4.</title>
        <authorList>
            <person name="Monod C."/>
            <person name="Repoila F."/>
            <person name="Kutateladze M."/>
            <person name="Tetart F."/>
            <person name="Krisch H.M."/>
        </authorList>
    </citation>
    <scope>NUCLEOTIDE SEQUENCE [GENOMIC DNA]</scope>
</reference>
<protein>
    <recommendedName>
        <fullName evidence="1 2">Major capsid protein</fullName>
    </recommendedName>
    <alternativeName>
        <fullName evidence="1">Gene product 23</fullName>
    </alternativeName>
    <alternativeName>
        <fullName evidence="2 3">Major head protein</fullName>
    </alternativeName>
    <alternativeName>
        <fullName evidence="1 2">gp23</fullName>
    </alternativeName>
    <component>
        <recommendedName>
            <fullName evidence="1 2">Mature major capsid protein</fullName>
        </recommendedName>
        <alternativeName>
            <fullName evidence="2 3">gp23*</fullName>
        </alternativeName>
    </component>
</protein>
<gene>
    <name type="primary">23</name>
</gene>
<keyword id="KW-0167">Capsid protein</keyword>
<keyword id="KW-0426">Late protein</keyword>
<keyword id="KW-0946">Virion</keyword>
<organismHost>
    <name type="scientific">Escherichia coli</name>
    <dbReference type="NCBI Taxonomy" id="562"/>
</organismHost>
<name>CAPSH_BPT6</name>
<feature type="chain" id="PRO_0000164922" description="Major capsid protein">
    <location>
        <begin position="1"/>
        <end position="502" status="greater than"/>
    </location>
</feature>
<feature type="chain" id="PRO_0000432354" description="Mature major capsid protein">
    <location>
        <begin position="66"/>
        <end position="502"/>
    </location>
</feature>
<feature type="site" description="Cleavage" evidence="2">
    <location>
        <begin position="65"/>
        <end position="66"/>
    </location>
</feature>
<feature type="non-terminal residue">
    <location>
        <position position="502"/>
    </location>
</feature>
<evidence type="ECO:0000250" key="1">
    <source>
        <dbReference type="UniProtKB" id="P04535"/>
    </source>
</evidence>
<evidence type="ECO:0000255" key="2">
    <source>
        <dbReference type="HAMAP-Rule" id="MF_04117"/>
    </source>
</evidence>
<evidence type="ECO:0000305" key="3"/>
<organism>
    <name type="scientific">Enterobacteria phage T6</name>
    <name type="common">Bacteriophage T6</name>
    <dbReference type="NCBI Taxonomy" id="10666"/>
    <lineage>
        <taxon>Viruses</taxon>
        <taxon>Duplodnaviria</taxon>
        <taxon>Heunggongvirae</taxon>
        <taxon>Uroviricota</taxon>
        <taxon>Caudoviricetes</taxon>
        <taxon>Straboviridae</taxon>
        <taxon>Tevenvirinae</taxon>
        <taxon>Tequatrovirus</taxon>
        <taxon>Tequatrovirus T6</taxon>
    </lineage>
</organism>
<sequence>MTIKTKAELLNKWKPLLEGEGLPEIANSKQAIIAKIFENQEKDFQTAPEYKDEKIAQAFGSFLTEAEIGGDHGYNATNIAAGQTSGAVTQIGPAVMGMVRRAIPNLIAFDICGVQPMNSPTGQVFALRAVYGKDPIASGAKEAFHPMYGPDAMFSGQGAAKKFPALAASTQTVVGDIYTHFFQETGTVYLQASALVTIDASANDATKLDAEIKKQMEAGVLVEIAEGMATSIAELQEGFNGSTDNPWNEMGFRIDKQVIEAKSRQLKAAYSIELAQDLRAVHGMDADAELSGILATEIMLEINREVVDWINYSAQVGKSGMTLTPGSKAGVFDFQDPIDIRGARWAGESFKALLFQIDKEAVEIARQTGRGEGNFIIASRNVVNVLASVDTGISYAAQGLATGFNTDTTKSVFAGVLGGKYRVYIDQYAKQDYFTVGYKGPNEMDAGIYYAPYVALTPLRGSDPKNFQPVMGFKTRYGIGINPFAESAAQAPASRIQSGMPS</sequence>
<proteinExistence type="inferred from homology"/>
<dbReference type="EMBL" id="Z78095">
    <property type="protein sequence ID" value="CAB01541.1"/>
    <property type="molecule type" value="Genomic_DNA"/>
</dbReference>
<dbReference type="SMR" id="Q38055"/>
<dbReference type="GO" id="GO:0019028">
    <property type="term" value="C:viral capsid"/>
    <property type="evidence" value="ECO:0007669"/>
    <property type="project" value="UniProtKB-KW"/>
</dbReference>
<dbReference type="HAMAP" id="MF_04117">
    <property type="entry name" value="CAPSID_H_T4"/>
    <property type="match status" value="1"/>
</dbReference>
<dbReference type="InterPro" id="IPR038997">
    <property type="entry name" value="CAPSID_Myoviridae"/>
</dbReference>
<dbReference type="InterPro" id="IPR010762">
    <property type="entry name" value="Gp23/Gp24_T4-like"/>
</dbReference>
<dbReference type="Pfam" id="PF07068">
    <property type="entry name" value="Gp23"/>
    <property type="match status" value="1"/>
</dbReference>
<comment type="function">
    <text evidence="1 2">Major capsid protein that self-associates to form hexamers, building most of the capsid in association with pentons made of the capsid vertex protein and one dodecamer of the portal protein. The major capsid protein self-associates to form 160 hexamers, building most of the T=13 laevo capsid. Folding of major capsid protein requires the assistance of two chaperones, the host chaperone groL acting with the phage encoded gp23-specific chaperone, gp31. The capsid also contains two nonessential outer capsid proteins, Hoc and Soc, which decorate the capsid surface. Through binding to adjacent gp23 subunits, Soc reinforces the capsid structure.</text>
</comment>
<comment type="subunit">
    <text evidence="1 2">Homohexamer. Interacts with the portal protein. Interacts with the capsid vertex protein that forms pentamers. Interacts with hoc; one hoc molecule associates with each capsid hexamer. Interacts with soc; this interaction reinforces the capsid structure. A total of 960 subunits of the major capsid protein forms the 160 hexamers.</text>
</comment>
<comment type="subcellular location">
    <molecule>Major capsid protein</molecule>
    <subcellularLocation>
        <location>Virion</location>
    </subcellularLocation>
    <text evidence="2">Part of the capsid icosahedric shell of the immature virion. The capsid is made of 930 copies arranged as 160 hexamers.</text>
</comment>
<comment type="subcellular location">
    <molecule>Mature major capsid protein</molecule>
    <subcellularLocation>
        <location>Virion</location>
    </subcellularLocation>
    <text evidence="1 2">Part of the capsid icosahedric shell of the mature virion. The capsid is made of 930 copies arranged as 160 hexamers.</text>
</comment>
<comment type="PTM">
    <text evidence="2">A proteolytic cleavage by the prohead core protein protease gives rise to the mature major capsid protein during virus maturation.</text>
</comment>
<comment type="similarity">
    <text evidence="3">Belongs to the T4 phage capsid protein family.</text>
</comment>